<evidence type="ECO:0000255" key="1"/>
<evidence type="ECO:0000269" key="2">
    <source>
    </source>
</evidence>
<evidence type="ECO:0000269" key="3">
    <source>
    </source>
</evidence>
<evidence type="ECO:0000269" key="4">
    <source>
    </source>
</evidence>
<evidence type="ECO:0000303" key="5">
    <source>
    </source>
</evidence>
<evidence type="ECO:0000305" key="6"/>
<evidence type="ECO:0007744" key="7">
    <source>
        <dbReference type="PDB" id="3A9F"/>
    </source>
</evidence>
<evidence type="ECO:0007829" key="8">
    <source>
        <dbReference type="PDB" id="3A9F"/>
    </source>
</evidence>
<evidence type="ECO:0007829" key="9">
    <source>
        <dbReference type="PDB" id="7UEA"/>
    </source>
</evidence>
<accession>O07091</accession>
<name>CY551_CHLTE</name>
<protein>
    <recommendedName>
        <fullName>Cytochrome c</fullName>
    </recommendedName>
    <alternativeName>
        <fullName evidence="5">Cytochrome c-z</fullName>
        <shortName evidence="5">Cyt c-z</shortName>
    </alternativeName>
    <alternativeName>
        <fullName>Photosystem P840 reaction center cytochrome c-551</fullName>
    </alternativeName>
</protein>
<sequence length="206" mass="22715">MDKNSNGKLIALAVGGAVLMGALFFSVSFLTGYIPAPNHSAILTPLRSFMGWFLLIFCASIIIMGLGKMSSAISDKWFLSFPLSIFVIVMVMFLSLRVYWEKGRTTTVDGKYIRTTAELKEFLNKPAATSDVPPAPAGFDFDAAKKLVDVRCNKCHTLDSVADLFRTKYKKTGQVNLIVKRMQGFPGSGISDDDAKTIGIWLHEKF</sequence>
<dbReference type="EMBL" id="AB004460">
    <property type="protein sequence ID" value="BAA20402.1"/>
    <property type="molecule type" value="Genomic_DNA"/>
</dbReference>
<dbReference type="EMBL" id="AF287481">
    <property type="protein sequence ID" value="AAG12197.1"/>
    <property type="molecule type" value="Genomic_DNA"/>
</dbReference>
<dbReference type="EMBL" id="AE006470">
    <property type="protein sequence ID" value="AAM72864.1"/>
    <property type="molecule type" value="Genomic_DNA"/>
</dbReference>
<dbReference type="RefSeq" id="NP_662522.1">
    <property type="nucleotide sequence ID" value="NC_002932.3"/>
</dbReference>
<dbReference type="RefSeq" id="WP_010933303.1">
    <property type="nucleotide sequence ID" value="NC_002932.3"/>
</dbReference>
<dbReference type="PDB" id="3A9F">
    <property type="method" value="X-ray"/>
    <property type="resolution" value="1.30 A"/>
    <property type="chains" value="A/B=117-206"/>
</dbReference>
<dbReference type="PDB" id="7UEA">
    <property type="method" value="EM"/>
    <property type="resolution" value="3.49 A"/>
    <property type="chains" value="C/c=1-206"/>
</dbReference>
<dbReference type="PDB" id="7UEB">
    <property type="method" value="EM"/>
    <property type="resolution" value="3.08 A"/>
    <property type="chains" value="C/c=1-206"/>
</dbReference>
<dbReference type="PDB" id="7Z6Q">
    <property type="method" value="EM"/>
    <property type="resolution" value="2.50 A"/>
    <property type="chains" value="C/c=1-206"/>
</dbReference>
<dbReference type="PDB" id="8GWA">
    <property type="method" value="EM"/>
    <property type="resolution" value="2.90 A"/>
    <property type="chains" value="C/c=1-206"/>
</dbReference>
<dbReference type="PDBsum" id="3A9F"/>
<dbReference type="PDBsum" id="7UEA"/>
<dbReference type="PDBsum" id="7UEB"/>
<dbReference type="PDBsum" id="7Z6Q"/>
<dbReference type="PDBsum" id="8GWA"/>
<dbReference type="EMDB" id="EMD-14528"/>
<dbReference type="EMDB" id="EMD-26469"/>
<dbReference type="EMDB" id="EMD-26471"/>
<dbReference type="EMDB" id="EMD-34307"/>
<dbReference type="SMR" id="O07091"/>
<dbReference type="STRING" id="194439.CT1639"/>
<dbReference type="EnsemblBacteria" id="AAM72864">
    <property type="protein sequence ID" value="AAM72864"/>
    <property type="gene ID" value="CT1639"/>
</dbReference>
<dbReference type="KEGG" id="cte:CT1639"/>
<dbReference type="PATRIC" id="fig|194439.7.peg.1482"/>
<dbReference type="eggNOG" id="COG3245">
    <property type="taxonomic scope" value="Bacteria"/>
</dbReference>
<dbReference type="HOGENOM" id="CLU_1293374_0_0_10"/>
<dbReference type="OrthoDB" id="594564at2"/>
<dbReference type="EvolutionaryTrace" id="O07091"/>
<dbReference type="Proteomes" id="UP000001007">
    <property type="component" value="Chromosome"/>
</dbReference>
<dbReference type="GO" id="GO:0005886">
    <property type="term" value="C:plasma membrane"/>
    <property type="evidence" value="ECO:0007669"/>
    <property type="project" value="UniProtKB-SubCell"/>
</dbReference>
<dbReference type="GO" id="GO:0009055">
    <property type="term" value="F:electron transfer activity"/>
    <property type="evidence" value="ECO:0007669"/>
    <property type="project" value="InterPro"/>
</dbReference>
<dbReference type="GO" id="GO:0020037">
    <property type="term" value="F:heme binding"/>
    <property type="evidence" value="ECO:0007669"/>
    <property type="project" value="InterPro"/>
</dbReference>
<dbReference type="GO" id="GO:0046872">
    <property type="term" value="F:metal ion binding"/>
    <property type="evidence" value="ECO:0007669"/>
    <property type="project" value="UniProtKB-KW"/>
</dbReference>
<dbReference type="GO" id="GO:0015979">
    <property type="term" value="P:photosynthesis"/>
    <property type="evidence" value="ECO:0007669"/>
    <property type="project" value="UniProtKB-KW"/>
</dbReference>
<dbReference type="Gene3D" id="1.10.760.10">
    <property type="entry name" value="Cytochrome c-like domain"/>
    <property type="match status" value="1"/>
</dbReference>
<dbReference type="InterPro" id="IPR036909">
    <property type="entry name" value="Cyt_c-like_dom_sf"/>
</dbReference>
<dbReference type="InterPro" id="IPR019604">
    <property type="entry name" value="Cytochrome-c551"/>
</dbReference>
<dbReference type="Pfam" id="PF10643">
    <property type="entry name" value="Cytochrome-c551"/>
    <property type="match status" value="1"/>
</dbReference>
<dbReference type="PIRSF" id="PIRSF000009">
    <property type="entry name" value="Cytochrome_c551"/>
    <property type="match status" value="1"/>
</dbReference>
<dbReference type="SUPFAM" id="SSF46626">
    <property type="entry name" value="Cytochrome c"/>
    <property type="match status" value="1"/>
</dbReference>
<keyword id="KW-0002">3D-structure</keyword>
<keyword id="KW-0997">Cell inner membrane</keyword>
<keyword id="KW-1003">Cell membrane</keyword>
<keyword id="KW-0249">Electron transport</keyword>
<keyword id="KW-0349">Heme</keyword>
<keyword id="KW-0408">Iron</keyword>
<keyword id="KW-0472">Membrane</keyword>
<keyword id="KW-0479">Metal-binding</keyword>
<keyword id="KW-0602">Photosynthesis</keyword>
<keyword id="KW-0674">Reaction center</keyword>
<keyword id="KW-1185">Reference proteome</keyword>
<keyword id="KW-0812">Transmembrane</keyword>
<keyword id="KW-1133">Transmembrane helix</keyword>
<keyword id="KW-0813">Transport</keyword>
<gene>
    <name type="primary">pscC</name>
    <name type="ordered locus">CT1639</name>
</gene>
<organism>
    <name type="scientific">Chlorobaculum tepidum (strain ATCC 49652 / DSM 12025 / NBRC 103806 / TLS)</name>
    <name type="common">Chlorobium tepidum</name>
    <dbReference type="NCBI Taxonomy" id="194439"/>
    <lineage>
        <taxon>Bacteria</taxon>
        <taxon>Pseudomonadati</taxon>
        <taxon>Chlorobiota</taxon>
        <taxon>Chlorobiia</taxon>
        <taxon>Chlorobiales</taxon>
        <taxon>Chlorobiaceae</taxon>
        <taxon>Chlorobaculum</taxon>
    </lineage>
</organism>
<feature type="chain" id="PRO_0000108388" description="Cytochrome c">
    <location>
        <begin position="1"/>
        <end position="206"/>
    </location>
</feature>
<feature type="transmembrane region" description="Helical" evidence="1">
    <location>
        <begin position="10"/>
        <end position="30"/>
    </location>
</feature>
<feature type="transmembrane region" description="Helical" evidence="1">
    <location>
        <begin position="49"/>
        <end position="69"/>
    </location>
</feature>
<feature type="transmembrane region" description="Helical" evidence="1">
    <location>
        <begin position="76"/>
        <end position="96"/>
    </location>
</feature>
<feature type="binding site" description="covalent" evidence="3 7">
    <location>
        <position position="152"/>
    </location>
    <ligand>
        <name>heme</name>
        <dbReference type="ChEBI" id="CHEBI:30413"/>
    </ligand>
</feature>
<feature type="binding site" description="covalent" evidence="3 7">
    <location>
        <position position="155"/>
    </location>
    <ligand>
        <name>heme</name>
        <dbReference type="ChEBI" id="CHEBI:30413"/>
    </ligand>
</feature>
<feature type="binding site" description="axial binding residue" evidence="3 7">
    <location>
        <position position="156"/>
    </location>
    <ligand>
        <name>heme</name>
        <dbReference type="ChEBI" id="CHEBI:30413"/>
    </ligand>
    <ligandPart>
        <name>Fe</name>
        <dbReference type="ChEBI" id="CHEBI:18248"/>
    </ligandPart>
</feature>
<feature type="binding site" description="axial binding residue" evidence="3 7">
    <location>
        <position position="182"/>
    </location>
    <ligand>
        <name>heme</name>
        <dbReference type="ChEBI" id="CHEBI:30413"/>
    </ligand>
    <ligandPart>
        <name>Fe</name>
        <dbReference type="ChEBI" id="CHEBI:18248"/>
    </ligandPart>
</feature>
<feature type="helix" evidence="9">
    <location>
        <begin position="10"/>
        <end position="31"/>
    </location>
</feature>
<feature type="strand" evidence="9">
    <location>
        <begin position="37"/>
        <end position="39"/>
    </location>
</feature>
<feature type="strand" evidence="9">
    <location>
        <begin position="41"/>
        <end position="43"/>
    </location>
</feature>
<feature type="helix" evidence="9">
    <location>
        <begin position="44"/>
        <end position="71"/>
    </location>
</feature>
<feature type="helix" evidence="9">
    <location>
        <begin position="75"/>
        <end position="98"/>
    </location>
</feature>
<feature type="helix" evidence="9">
    <location>
        <begin position="116"/>
        <end position="124"/>
    </location>
</feature>
<feature type="helix" evidence="8">
    <location>
        <begin position="141"/>
        <end position="151"/>
    </location>
</feature>
<feature type="strand" evidence="8">
    <location>
        <begin position="152"/>
        <end position="156"/>
    </location>
</feature>
<feature type="helix" evidence="8">
    <location>
        <begin position="159"/>
        <end position="161"/>
    </location>
</feature>
<feature type="helix" evidence="8">
    <location>
        <begin position="162"/>
        <end position="168"/>
    </location>
</feature>
<feature type="turn" evidence="8">
    <location>
        <begin position="169"/>
        <end position="173"/>
    </location>
</feature>
<feature type="helix" evidence="8">
    <location>
        <begin position="175"/>
        <end position="184"/>
    </location>
</feature>
<feature type="helix" evidence="8">
    <location>
        <begin position="192"/>
        <end position="205"/>
    </location>
</feature>
<comment type="function">
    <text evidence="4">Monoheme cytochrome which is the immediate electron donor to P840 of the photosynthetic reaction center complex.</text>
</comment>
<comment type="biophysicochemical properties">
    <redoxPotential>
        <text evidence="3">E(0) is +188 mV for the C-terminal domain (117-206) of cytochrome c (at pH 7.0).</text>
    </redoxPotential>
</comment>
<comment type="subunit">
    <text evidence="2 3">Monomer (PubMed:20156447). Component of the photosynthetic reaction center composed of protein subunits PscA, PscC, PscB and PscD. The reaction center interacts with FmoA (which forms the Fenna-Matthews-Olson (FMO) complex). The reaction center/FmoA complex has two PscA subunits, one PscB and one PscD subunit, probably two FmoA complexes and at least one PscC subunit (PubMed:10398586).</text>
</comment>
<comment type="subcellular location">
    <subcellularLocation>
        <location evidence="2">Cell inner membrane</location>
        <topology evidence="6">Multi-pass membrane protein</topology>
    </subcellularLocation>
</comment>
<comment type="PTM">
    <text evidence="3">Binds 1 heme group per subunit.</text>
</comment>
<reference key="1">
    <citation type="journal article" date="1997" name="Biochemistry">
        <title>Viscosity dependence of the electron transfer rate from bound cytochrome c to P840 in the photosynthetic reaction center of the green sulfur bacterium Chlorobium tepidum.</title>
        <authorList>
            <person name="Oh-oka H."/>
            <person name="Iwaki M."/>
            <person name="Itoh S."/>
        </authorList>
    </citation>
    <scope>NUCLEOTIDE SEQUENCE [GENOMIC DNA]</scope>
    <scope>FUNCTION</scope>
</reference>
<reference key="2">
    <citation type="journal article" date="2000" name="Science">
        <title>Molecular evidence for the early evolution of photosynthesis.</title>
        <authorList>
            <person name="Xiong J."/>
            <person name="Fischer W.M."/>
            <person name="Inoue K."/>
            <person name="Nakahara M."/>
            <person name="Bauer C.E."/>
        </authorList>
    </citation>
    <scope>NUCLEOTIDE SEQUENCE [GENOMIC DNA]</scope>
    <source>
        <strain>ATCC 49652 / DSM 12025 / NBRC 103806 / TLS</strain>
    </source>
</reference>
<reference key="3">
    <citation type="journal article" date="2002" name="Proc. Natl. Acad. Sci. U.S.A.">
        <title>The complete genome sequence of Chlorobium tepidum TLS, a photosynthetic, anaerobic, green-sulfur bacterium.</title>
        <authorList>
            <person name="Eisen J.A."/>
            <person name="Nelson K.E."/>
            <person name="Paulsen I.T."/>
            <person name="Heidelberg J.F."/>
            <person name="Wu M."/>
            <person name="Dodson R.J."/>
            <person name="DeBoy R.T."/>
            <person name="Gwinn M.L."/>
            <person name="Nelson W.C."/>
            <person name="Haft D.H."/>
            <person name="Hickey E.K."/>
            <person name="Peterson J.D."/>
            <person name="Durkin A.S."/>
            <person name="Kolonay J.F."/>
            <person name="Yang F."/>
            <person name="Holt I.E."/>
            <person name="Umayam L.A."/>
            <person name="Mason T.M."/>
            <person name="Brenner M."/>
            <person name="Shea T.P."/>
            <person name="Parksey D.S."/>
            <person name="Nierman W.C."/>
            <person name="Feldblyum T.V."/>
            <person name="Hansen C.L."/>
            <person name="Craven M.B."/>
            <person name="Radune D."/>
            <person name="Vamathevan J.J."/>
            <person name="Khouri H.M."/>
            <person name="White O."/>
            <person name="Gruber T.M."/>
            <person name="Ketchum K.A."/>
            <person name="Venter J.C."/>
            <person name="Tettelin H."/>
            <person name="Bryant D.A."/>
            <person name="Fraser C.M."/>
        </authorList>
    </citation>
    <scope>NUCLEOTIDE SEQUENCE [LARGE SCALE GENOMIC DNA]</scope>
    <source>
        <strain>ATCC 49652 / DSM 12025 / NBRC 103806 / TLS</strain>
    </source>
</reference>
<reference key="4">
    <citation type="journal article" date="1999" name="J. Mol. Biol.">
        <title>The reaction center complex from the green sulfur bacterium Chlorobium tepidum: a structural analysis by scanning transmission electron microscopy.</title>
        <authorList>
            <person name="Remigy H.W."/>
            <person name="Stahlberg H."/>
            <person name="Fotiadis D."/>
            <person name="Mueller S.A."/>
            <person name="Wolpensinger B."/>
            <person name="Engel A."/>
            <person name="Hauska G."/>
            <person name="Tsiotis G."/>
        </authorList>
    </citation>
    <scope>ELECTRON MICROSCOPY</scope>
    <scope>SUBUNIT</scope>
    <scope>SUBCELLULAR LOCATION</scope>
</reference>
<reference key="5">
    <citation type="journal article" date="2010" name="J. Mol. Biol.">
        <title>Crystal structure of the electron carrier domain of the reaction center cytochrome c(z) subunit from green photosynthetic bacterium Chlorobium tepidum.</title>
        <authorList>
            <person name="Hirano Y."/>
            <person name="Higuchi M."/>
            <person name="Azai C."/>
            <person name="Oh-Oka H."/>
            <person name="Miki K."/>
            <person name="Wang Z.Y."/>
        </authorList>
    </citation>
    <scope>X-RAY CRYSTALLOGRAPHY (1.30 ANGSTROMS) OF 117-206 IN COMPLEX WITH HEME</scope>
    <scope>BIOPHYSICOCHEMICAL PROPERTIES</scope>
    <scope>SUBUNIT</scope>
    <scope>PTM</scope>
</reference>
<proteinExistence type="evidence at protein level"/>